<dbReference type="EMBL" id="CP000159">
    <property type="protein sequence ID" value="ABC45386.1"/>
    <property type="molecule type" value="Genomic_DNA"/>
</dbReference>
<dbReference type="RefSeq" id="WP_011405171.1">
    <property type="nucleotide sequence ID" value="NC_007677.1"/>
</dbReference>
<dbReference type="RefSeq" id="YP_446553.1">
    <property type="nucleotide sequence ID" value="NC_007677.1"/>
</dbReference>
<dbReference type="SMR" id="Q2RZS8"/>
<dbReference type="STRING" id="309807.SRU_2454"/>
<dbReference type="EnsemblBacteria" id="ABC45386">
    <property type="protein sequence ID" value="ABC45386"/>
    <property type="gene ID" value="SRU_2454"/>
</dbReference>
<dbReference type="KEGG" id="sru:SRU_2454"/>
<dbReference type="eggNOG" id="COG0239">
    <property type="taxonomic scope" value="Bacteria"/>
</dbReference>
<dbReference type="HOGENOM" id="CLU_114342_2_3_10"/>
<dbReference type="OrthoDB" id="9815830at2"/>
<dbReference type="Proteomes" id="UP000008674">
    <property type="component" value="Chromosome"/>
</dbReference>
<dbReference type="GO" id="GO:0005886">
    <property type="term" value="C:plasma membrane"/>
    <property type="evidence" value="ECO:0007669"/>
    <property type="project" value="UniProtKB-SubCell"/>
</dbReference>
<dbReference type="GO" id="GO:0062054">
    <property type="term" value="F:fluoride channel activity"/>
    <property type="evidence" value="ECO:0007669"/>
    <property type="project" value="UniProtKB-UniRule"/>
</dbReference>
<dbReference type="GO" id="GO:0046872">
    <property type="term" value="F:metal ion binding"/>
    <property type="evidence" value="ECO:0007669"/>
    <property type="project" value="UniProtKB-KW"/>
</dbReference>
<dbReference type="GO" id="GO:0140114">
    <property type="term" value="P:cellular detoxification of fluoride"/>
    <property type="evidence" value="ECO:0007669"/>
    <property type="project" value="UniProtKB-UniRule"/>
</dbReference>
<dbReference type="HAMAP" id="MF_00454">
    <property type="entry name" value="FluC"/>
    <property type="match status" value="1"/>
</dbReference>
<dbReference type="InterPro" id="IPR003691">
    <property type="entry name" value="FluC"/>
</dbReference>
<dbReference type="NCBIfam" id="TIGR00494">
    <property type="entry name" value="crcB"/>
    <property type="match status" value="1"/>
</dbReference>
<dbReference type="PANTHER" id="PTHR28259">
    <property type="entry name" value="FLUORIDE EXPORT PROTEIN 1-RELATED"/>
    <property type="match status" value="1"/>
</dbReference>
<dbReference type="PANTHER" id="PTHR28259:SF1">
    <property type="entry name" value="FLUORIDE EXPORT PROTEIN 1-RELATED"/>
    <property type="match status" value="1"/>
</dbReference>
<dbReference type="Pfam" id="PF02537">
    <property type="entry name" value="CRCB"/>
    <property type="match status" value="1"/>
</dbReference>
<reference key="1">
    <citation type="journal article" date="2005" name="Proc. Natl. Acad. Sci. U.S.A.">
        <title>The genome of Salinibacter ruber: convergence and gene exchange among hyperhalophilic bacteria and archaea.</title>
        <authorList>
            <person name="Mongodin E.F."/>
            <person name="Nelson K.E."/>
            <person name="Daugherty S."/>
            <person name="DeBoy R.T."/>
            <person name="Wister J."/>
            <person name="Khouri H."/>
            <person name="Weidman J."/>
            <person name="Walsh D.A."/>
            <person name="Papke R.T."/>
            <person name="Sanchez Perez G."/>
            <person name="Sharma A.K."/>
            <person name="Nesbo C.L."/>
            <person name="MacLeod D."/>
            <person name="Bapteste E."/>
            <person name="Doolittle W.F."/>
            <person name="Charlebois R.L."/>
            <person name="Legault B."/>
            <person name="Rodriguez-Valera F."/>
        </authorList>
    </citation>
    <scope>NUCLEOTIDE SEQUENCE [LARGE SCALE GENOMIC DNA]</scope>
    <source>
        <strain>DSM 13855 / CECT 5946 / M31</strain>
    </source>
</reference>
<sequence length="133" mass="13829">MLKLLWIALGGSLGALCRYGLSVLARWGLPPTVPWGTLAANLVGCFLIGGLWVLAAQYSFSEELRVFIFTGGIGSLTTFSTYSLESLLLLREGRVWAGLANVLVSNVLGLVLVAIGAGCALFLLGGPVAAFGA</sequence>
<keyword id="KW-0997">Cell inner membrane</keyword>
<keyword id="KW-1003">Cell membrane</keyword>
<keyword id="KW-0407">Ion channel</keyword>
<keyword id="KW-0406">Ion transport</keyword>
<keyword id="KW-0472">Membrane</keyword>
<keyword id="KW-0479">Metal-binding</keyword>
<keyword id="KW-1185">Reference proteome</keyword>
<keyword id="KW-0915">Sodium</keyword>
<keyword id="KW-0812">Transmembrane</keyword>
<keyword id="KW-1133">Transmembrane helix</keyword>
<keyword id="KW-0813">Transport</keyword>
<protein>
    <recommendedName>
        <fullName evidence="1">Fluoride-specific ion channel FluC</fullName>
    </recommendedName>
</protein>
<evidence type="ECO:0000255" key="1">
    <source>
        <dbReference type="HAMAP-Rule" id="MF_00454"/>
    </source>
</evidence>
<comment type="function">
    <text evidence="1">Fluoride-specific ion channel. Important for reducing fluoride concentration in the cell, thus reducing its toxicity.</text>
</comment>
<comment type="catalytic activity">
    <reaction evidence="1">
        <text>fluoride(in) = fluoride(out)</text>
        <dbReference type="Rhea" id="RHEA:76159"/>
        <dbReference type="ChEBI" id="CHEBI:17051"/>
    </reaction>
    <physiologicalReaction direction="left-to-right" evidence="1">
        <dbReference type="Rhea" id="RHEA:76160"/>
    </physiologicalReaction>
</comment>
<comment type="activity regulation">
    <text evidence="1">Na(+) is not transported, but it plays an essential structural role and its presence is essential for fluoride channel function.</text>
</comment>
<comment type="subcellular location">
    <subcellularLocation>
        <location evidence="1">Cell inner membrane</location>
        <topology evidence="1">Multi-pass membrane protein</topology>
    </subcellularLocation>
</comment>
<comment type="similarity">
    <text evidence="1">Belongs to the fluoride channel Fluc/FEX (TC 1.A.43) family.</text>
</comment>
<gene>
    <name evidence="1" type="primary">fluC</name>
    <name evidence="1" type="synonym">crcB</name>
    <name type="ordered locus">SRU_2454</name>
</gene>
<name>FLUC_SALRD</name>
<proteinExistence type="inferred from homology"/>
<feature type="chain" id="PRO_0000252935" description="Fluoride-specific ion channel FluC">
    <location>
        <begin position="1"/>
        <end position="133"/>
    </location>
</feature>
<feature type="transmembrane region" description="Helical" evidence="1">
    <location>
        <begin position="4"/>
        <end position="24"/>
    </location>
</feature>
<feature type="transmembrane region" description="Helical" evidence="1">
    <location>
        <begin position="35"/>
        <end position="55"/>
    </location>
</feature>
<feature type="transmembrane region" description="Helical" evidence="1">
    <location>
        <begin position="66"/>
        <end position="86"/>
    </location>
</feature>
<feature type="transmembrane region" description="Helical" evidence="1">
    <location>
        <begin position="107"/>
        <end position="127"/>
    </location>
</feature>
<feature type="binding site" evidence="1">
    <location>
        <position position="74"/>
    </location>
    <ligand>
        <name>Na(+)</name>
        <dbReference type="ChEBI" id="CHEBI:29101"/>
        <note>structural</note>
    </ligand>
</feature>
<feature type="binding site" evidence="1">
    <location>
        <position position="77"/>
    </location>
    <ligand>
        <name>Na(+)</name>
        <dbReference type="ChEBI" id="CHEBI:29101"/>
        <note>structural</note>
    </ligand>
</feature>
<accession>Q2RZS8</accession>
<organism>
    <name type="scientific">Salinibacter ruber (strain DSM 13855 / M31)</name>
    <dbReference type="NCBI Taxonomy" id="309807"/>
    <lineage>
        <taxon>Bacteria</taxon>
        <taxon>Pseudomonadati</taxon>
        <taxon>Rhodothermota</taxon>
        <taxon>Rhodothermia</taxon>
        <taxon>Rhodothermales</taxon>
        <taxon>Salinibacteraceae</taxon>
        <taxon>Salinibacter</taxon>
    </lineage>
</organism>